<comment type="function">
    <text evidence="1 4">Is able to inhibit all four classes of proteinases by a unique 'trapping' mechanism. This protein has a peptide stretch, called the 'bait region' which contains specific cleavage sites for different proteinases. When a proteinase cleaves the bait region, a conformational change is induced in the protein which traps the proteinase. The entrapped enzyme remains active against low molecular weight substrates (activity against high molecular weight substrates is greatly reduced). Following cleavage in the bait region a thioester bond is hydrolyzed and mediates the covalent binding of the protein to the proteinase (By similarity). Displays inhibitory activity against chymotrypsin, papain, thermolysin, subtilisin A and, to a lesser extent, elastase but not trypsin. May play an important role during desquamation by inhibiting extracellular proteases.</text>
</comment>
<comment type="subunit">
    <text evidence="4">Monomer.</text>
</comment>
<comment type="subcellular location">
    <subcellularLocation>
        <location evidence="4">Secreted</location>
    </subcellularLocation>
</comment>
<comment type="alternative products">
    <event type="alternative splicing"/>
    <isoform>
        <id>A8K2U0-1</id>
        <name>1</name>
        <sequence type="displayed"/>
    </isoform>
    <isoform>
        <id>A8K2U0-2</id>
        <name>2</name>
        <sequence type="described" ref="VSP_057135"/>
    </isoform>
</comment>
<comment type="tissue specificity">
    <text evidence="4">In the epidermis, expressed predominantly in the granular layer at the apical edge of keratinocytes (at protein level). Also detected in placenta, testis and thymus but not in epithelia of kidney, lung, small intestine or colon.</text>
</comment>
<comment type="developmental stage">
    <text evidence="4">Up-regulated during keratinocyte differentiation.</text>
</comment>
<comment type="disease" evidence="6">
    <disease id="DI-05294">
        <name>Otitis media</name>
        <acronym>OM</acronym>
        <description>An inflammation of the middle ear resulting in earache, fever, hearing disturbance, and vertigo.</description>
        <dbReference type="MIM" id="166760"/>
    </disease>
    <text>Disease susceptibility is associated with variants affecting the gene represented in this entry.</text>
</comment>
<comment type="similarity">
    <text evidence="2">Belongs to the protease inhibitor I39 (alpha-2-macroglobulin) family.</text>
</comment>
<comment type="sequence caution" evidence="9">
    <conflict type="erroneous initiation">
        <sequence resource="EMBL-CDS" id="BAB71612"/>
    </conflict>
</comment>
<comment type="sequence caution" evidence="9">
    <conflict type="erroneous initiation">
        <sequence resource="EMBL-CDS" id="BAC04793"/>
    </conflict>
</comment>
<comment type="sequence caution" evidence="9">
    <conflict type="erroneous initiation">
        <sequence resource="EMBL-CDS" id="BAC85653"/>
    </conflict>
</comment>
<comment type="sequence caution" evidence="9">
    <conflict type="erroneous initiation">
        <sequence resource="EMBL-CDS" id="BAC85654"/>
    </conflict>
</comment>
<organism>
    <name type="scientific">Homo sapiens</name>
    <name type="common">Human</name>
    <dbReference type="NCBI Taxonomy" id="9606"/>
    <lineage>
        <taxon>Eukaryota</taxon>
        <taxon>Metazoa</taxon>
        <taxon>Chordata</taxon>
        <taxon>Craniata</taxon>
        <taxon>Vertebrata</taxon>
        <taxon>Euteleostomi</taxon>
        <taxon>Mammalia</taxon>
        <taxon>Eutheria</taxon>
        <taxon>Euarchontoglires</taxon>
        <taxon>Primates</taxon>
        <taxon>Haplorrhini</taxon>
        <taxon>Catarrhini</taxon>
        <taxon>Hominidae</taxon>
        <taxon>Homo</taxon>
    </lineage>
</organism>
<protein>
    <recommendedName>
        <fullName>Alpha-2-macroglobulin-like protein 1</fullName>
    </recommendedName>
    <alternativeName>
        <fullName>C3 and PZP-like alpha-2-macroglobulin domain-containing protein 9</fullName>
    </alternativeName>
</protein>
<dbReference type="EMBL" id="AK057908">
    <property type="protein sequence ID" value="BAB71612.1"/>
    <property type="status" value="ALT_INIT"/>
    <property type="molecule type" value="mRNA"/>
</dbReference>
<dbReference type="EMBL" id="AK096448">
    <property type="protein sequence ID" value="BAC04793.1"/>
    <property type="status" value="ALT_INIT"/>
    <property type="molecule type" value="mRNA"/>
</dbReference>
<dbReference type="EMBL" id="AK123591">
    <property type="protein sequence ID" value="BAC85653.1"/>
    <property type="status" value="ALT_INIT"/>
    <property type="molecule type" value="mRNA"/>
</dbReference>
<dbReference type="EMBL" id="AK123592">
    <property type="protein sequence ID" value="BAC85654.1"/>
    <property type="status" value="ALT_INIT"/>
    <property type="molecule type" value="mRNA"/>
</dbReference>
<dbReference type="EMBL" id="AK290355">
    <property type="protein sequence ID" value="BAF83044.1"/>
    <property type="molecule type" value="mRNA"/>
</dbReference>
<dbReference type="EMBL" id="AK302555">
    <property type="protein sequence ID" value="BAH13740.1"/>
    <property type="molecule type" value="mRNA"/>
</dbReference>
<dbReference type="EMBL" id="AL832139">
    <property type="status" value="NOT_ANNOTATED_CDS"/>
    <property type="molecule type" value="mRNA"/>
</dbReference>
<dbReference type="EMBL" id="AC006513">
    <property type="status" value="NOT_ANNOTATED_CDS"/>
    <property type="molecule type" value="Genomic_DNA"/>
</dbReference>
<dbReference type="EMBL" id="AC006581">
    <property type="status" value="NOT_ANNOTATED_CDS"/>
    <property type="molecule type" value="Genomic_DNA"/>
</dbReference>
<dbReference type="EMBL" id="CH471116">
    <property type="protein sequence ID" value="EAW88603.1"/>
    <property type="molecule type" value="Genomic_DNA"/>
</dbReference>
<dbReference type="EMBL" id="CH471116">
    <property type="protein sequence ID" value="EAW88606.1"/>
    <property type="molecule type" value="Genomic_DNA"/>
</dbReference>
<dbReference type="EMBL" id="BC093840">
    <property type="protein sequence ID" value="AAH93840.2"/>
    <property type="molecule type" value="mRNA"/>
</dbReference>
<dbReference type="EMBL" id="BC112131">
    <property type="protein sequence ID" value="AAI12132.1"/>
    <property type="molecule type" value="mRNA"/>
</dbReference>
<dbReference type="CCDS" id="CCDS73439.1">
    <molecule id="A8K2U0-2"/>
</dbReference>
<dbReference type="CCDS" id="CCDS8596.2">
    <molecule id="A8K2U0-1"/>
</dbReference>
<dbReference type="RefSeq" id="NP_001269353.2">
    <molecule id="A8K2U0-2"/>
    <property type="nucleotide sequence ID" value="NM_001282424.3"/>
</dbReference>
<dbReference type="RefSeq" id="NP_653271.3">
    <molecule id="A8K2U0-1"/>
    <property type="nucleotide sequence ID" value="NM_144670.6"/>
</dbReference>
<dbReference type="RefSeq" id="XP_016874359.1">
    <molecule id="A8K2U0-1"/>
    <property type="nucleotide sequence ID" value="XM_017018870.2"/>
</dbReference>
<dbReference type="PDB" id="7Q1Y">
    <property type="method" value="X-ray"/>
    <property type="resolution" value="4.40 A"/>
    <property type="chains" value="A/B=19-1454"/>
</dbReference>
<dbReference type="PDB" id="7Q5Z">
    <property type="method" value="EM"/>
    <property type="resolution" value="3.25 A"/>
    <property type="chains" value="A=19-1454"/>
</dbReference>
<dbReference type="PDB" id="7Q60">
    <property type="method" value="EM"/>
    <property type="resolution" value="3.13 A"/>
    <property type="chains" value="A=19-1454"/>
</dbReference>
<dbReference type="PDB" id="7Q61">
    <property type="method" value="EM"/>
    <property type="resolution" value="2.88 A"/>
    <property type="chains" value="A=19-1454"/>
</dbReference>
<dbReference type="PDB" id="7Q62">
    <property type="method" value="EM"/>
    <property type="resolution" value="3.18 A"/>
    <property type="chains" value="A/B=19-1454"/>
</dbReference>
<dbReference type="PDBsum" id="7Q1Y"/>
<dbReference type="PDBsum" id="7Q5Z"/>
<dbReference type="PDBsum" id="7Q60"/>
<dbReference type="PDBsum" id="7Q61"/>
<dbReference type="PDBsum" id="7Q62"/>
<dbReference type="EMDB" id="EMD-13847"/>
<dbReference type="EMDB" id="EMD-13848"/>
<dbReference type="EMDB" id="EMD-13849"/>
<dbReference type="EMDB" id="EMD-13850"/>
<dbReference type="SMR" id="A8K2U0"/>
<dbReference type="FunCoup" id="A8K2U0">
    <property type="interactions" value="344"/>
</dbReference>
<dbReference type="IntAct" id="A8K2U0">
    <property type="interactions" value="110"/>
</dbReference>
<dbReference type="MINT" id="A8K2U0"/>
<dbReference type="STRING" id="9606.ENSP00000299698"/>
<dbReference type="MEROPS" id="I39.007"/>
<dbReference type="GlyConnect" id="1003">
    <property type="glycosylation" value="3 N-Linked glycans (4 sites)"/>
</dbReference>
<dbReference type="GlyCosmos" id="A8K2U0">
    <property type="glycosylation" value="6 sites, 3 glycans"/>
</dbReference>
<dbReference type="GlyGen" id="A8K2U0">
    <property type="glycosylation" value="9 sites, 4 N-linked glycans (4 sites)"/>
</dbReference>
<dbReference type="iPTMnet" id="A8K2U0"/>
<dbReference type="PhosphoSitePlus" id="A8K2U0"/>
<dbReference type="BioMuta" id="A2ML1"/>
<dbReference type="jPOST" id="A8K2U0"/>
<dbReference type="MassIVE" id="A8K2U0"/>
<dbReference type="PaxDb" id="9606-ENSP00000299698"/>
<dbReference type="PeptideAtlas" id="A8K2U0"/>
<dbReference type="PRIDE" id="A8K2U0"/>
<dbReference type="ProteomicsDB" id="1852">
    <molecule id="A8K2U0-1"/>
</dbReference>
<dbReference type="ProteomicsDB" id="26118"/>
<dbReference type="Antibodypedia" id="23090">
    <property type="antibodies" value="117 antibodies from 18 providers"/>
</dbReference>
<dbReference type="DNASU" id="144568"/>
<dbReference type="Ensembl" id="ENST00000299698.12">
    <molecule id="A8K2U0-1"/>
    <property type="protein sequence ID" value="ENSP00000299698.7"/>
    <property type="gene ID" value="ENSG00000166535.20"/>
</dbReference>
<dbReference type="Ensembl" id="ENST00000539547.5">
    <molecule id="A8K2U0-2"/>
    <property type="protein sequence ID" value="ENSP00000438292.1"/>
    <property type="gene ID" value="ENSG00000166535.20"/>
</dbReference>
<dbReference type="GeneID" id="144568"/>
<dbReference type="KEGG" id="hsa:144568"/>
<dbReference type="MANE-Select" id="ENST00000299698.12">
    <property type="protein sequence ID" value="ENSP00000299698.7"/>
    <property type="RefSeq nucleotide sequence ID" value="NM_144670.6"/>
    <property type="RefSeq protein sequence ID" value="NP_653271.3"/>
</dbReference>
<dbReference type="UCSC" id="uc001quz.6">
    <molecule id="A8K2U0-1"/>
    <property type="organism name" value="human"/>
</dbReference>
<dbReference type="AGR" id="HGNC:23336"/>
<dbReference type="CTD" id="144568"/>
<dbReference type="DisGeNET" id="144568"/>
<dbReference type="GeneCards" id="A2ML1"/>
<dbReference type="HGNC" id="HGNC:23336">
    <property type="gene designation" value="A2ML1"/>
</dbReference>
<dbReference type="HPA" id="ENSG00000166535">
    <property type="expression patterns" value="Tissue enhanced (esophagus, vagina)"/>
</dbReference>
<dbReference type="MalaCards" id="A2ML1"/>
<dbReference type="MIM" id="166760">
    <property type="type" value="phenotype"/>
</dbReference>
<dbReference type="MIM" id="610627">
    <property type="type" value="gene"/>
</dbReference>
<dbReference type="neXtProt" id="NX_A8K2U0"/>
<dbReference type="OpenTargets" id="ENSG00000166535"/>
<dbReference type="VEuPathDB" id="HostDB:ENSG00000166535"/>
<dbReference type="eggNOG" id="KOG1366">
    <property type="taxonomic scope" value="Eukaryota"/>
</dbReference>
<dbReference type="GeneTree" id="ENSGT00940000163018"/>
<dbReference type="HOGENOM" id="CLU_001634_0_0_1"/>
<dbReference type="InParanoid" id="A8K2U0"/>
<dbReference type="OMA" id="YQNAYLH"/>
<dbReference type="OrthoDB" id="9998011at2759"/>
<dbReference type="PAN-GO" id="A8K2U0">
    <property type="GO annotations" value="2 GO annotations based on evolutionary models"/>
</dbReference>
<dbReference type="PhylomeDB" id="A8K2U0"/>
<dbReference type="TreeFam" id="TF313285"/>
<dbReference type="PathwayCommons" id="A8K2U0"/>
<dbReference type="SignaLink" id="A8K2U0"/>
<dbReference type="BioGRID-ORCS" id="144568">
    <property type="hits" value="12 hits in 1146 CRISPR screens"/>
</dbReference>
<dbReference type="ChiTaRS" id="A2ML1">
    <property type="organism name" value="human"/>
</dbReference>
<dbReference type="GenomeRNAi" id="144568"/>
<dbReference type="Pharos" id="A8K2U0">
    <property type="development level" value="Tbio"/>
</dbReference>
<dbReference type="PRO" id="PR:A8K2U0"/>
<dbReference type="Proteomes" id="UP000005640">
    <property type="component" value="Chromosome 12"/>
</dbReference>
<dbReference type="RNAct" id="A8K2U0">
    <property type="molecule type" value="protein"/>
</dbReference>
<dbReference type="Bgee" id="ENSG00000166535">
    <property type="expression patterns" value="Expressed in lower esophagus mucosa and 116 other cell types or tissues"/>
</dbReference>
<dbReference type="ExpressionAtlas" id="A8K2U0">
    <property type="expression patterns" value="baseline and differential"/>
</dbReference>
<dbReference type="GO" id="GO:0070062">
    <property type="term" value="C:extracellular exosome"/>
    <property type="evidence" value="ECO:0007005"/>
    <property type="project" value="UniProtKB"/>
</dbReference>
<dbReference type="GO" id="GO:0005615">
    <property type="term" value="C:extracellular space"/>
    <property type="evidence" value="ECO:0000314"/>
    <property type="project" value="UniProtKB"/>
</dbReference>
<dbReference type="GO" id="GO:0030414">
    <property type="term" value="F:peptidase inhibitor activity"/>
    <property type="evidence" value="ECO:0000314"/>
    <property type="project" value="UniProtKB"/>
</dbReference>
<dbReference type="GO" id="GO:0004867">
    <property type="term" value="F:serine-type endopeptidase inhibitor activity"/>
    <property type="evidence" value="ECO:0007669"/>
    <property type="project" value="UniProtKB-KW"/>
</dbReference>
<dbReference type="GO" id="GO:0052548">
    <property type="term" value="P:regulation of endopeptidase activity"/>
    <property type="evidence" value="ECO:0000314"/>
    <property type="project" value="UniProtKB"/>
</dbReference>
<dbReference type="CDD" id="cd02897">
    <property type="entry name" value="A2M_2"/>
    <property type="match status" value="1"/>
</dbReference>
<dbReference type="FunFam" id="2.60.120.1540:FF:000007">
    <property type="entry name" value="Alpha-2-macroglobulin like 1"/>
    <property type="match status" value="1"/>
</dbReference>
<dbReference type="FunFam" id="2.60.40.10:FF:000312">
    <property type="entry name" value="Alpha-2-macroglobulin like 1"/>
    <property type="match status" value="1"/>
</dbReference>
<dbReference type="FunFam" id="2.60.40.1940:FF:000004">
    <property type="entry name" value="Alpha-2-macroglobulin like 1"/>
    <property type="match status" value="1"/>
</dbReference>
<dbReference type="FunFam" id="1.50.10.20:FF:000001">
    <property type="entry name" value="CD109 isoform 1"/>
    <property type="match status" value="1"/>
</dbReference>
<dbReference type="FunFam" id="2.60.40.1930:FF:000001">
    <property type="entry name" value="CD109 isoform 3"/>
    <property type="match status" value="1"/>
</dbReference>
<dbReference type="Gene3D" id="1.50.10.20">
    <property type="match status" value="1"/>
</dbReference>
<dbReference type="Gene3D" id="2.20.130.20">
    <property type="match status" value="1"/>
</dbReference>
<dbReference type="Gene3D" id="2.60.120.1540">
    <property type="match status" value="1"/>
</dbReference>
<dbReference type="Gene3D" id="2.60.40.1930">
    <property type="match status" value="2"/>
</dbReference>
<dbReference type="Gene3D" id="2.60.40.1940">
    <property type="match status" value="1"/>
</dbReference>
<dbReference type="Gene3D" id="6.20.50.160">
    <property type="match status" value="1"/>
</dbReference>
<dbReference type="Gene3D" id="2.60.40.690">
    <property type="entry name" value="Alpha-macroglobulin, receptor-binding domain"/>
    <property type="match status" value="1"/>
</dbReference>
<dbReference type="Gene3D" id="2.60.40.10">
    <property type="entry name" value="Immunoglobulins"/>
    <property type="match status" value="2"/>
</dbReference>
<dbReference type="InterPro" id="IPR009048">
    <property type="entry name" value="A-macroglobulin_rcpt-bd"/>
</dbReference>
<dbReference type="InterPro" id="IPR036595">
    <property type="entry name" value="A-macroglobulin_rcpt-bd_sf"/>
</dbReference>
<dbReference type="InterPro" id="IPR050473">
    <property type="entry name" value="A2M/Complement_sys"/>
</dbReference>
<dbReference type="InterPro" id="IPR011625">
    <property type="entry name" value="A2M_N_BRD"/>
</dbReference>
<dbReference type="InterPro" id="IPR041813">
    <property type="entry name" value="A2M_TED"/>
</dbReference>
<dbReference type="InterPro" id="IPR047565">
    <property type="entry name" value="Alpha-macroglob_thiol-ester_cl"/>
</dbReference>
<dbReference type="InterPro" id="IPR011626">
    <property type="entry name" value="Alpha-macroglobulin_TED"/>
</dbReference>
<dbReference type="InterPro" id="IPR013783">
    <property type="entry name" value="Ig-like_fold"/>
</dbReference>
<dbReference type="InterPro" id="IPR014756">
    <property type="entry name" value="Ig_E-set"/>
</dbReference>
<dbReference type="InterPro" id="IPR001599">
    <property type="entry name" value="Macroglobln_a2"/>
</dbReference>
<dbReference type="InterPro" id="IPR019742">
    <property type="entry name" value="MacrogloblnA2_CS"/>
</dbReference>
<dbReference type="InterPro" id="IPR002890">
    <property type="entry name" value="MG2"/>
</dbReference>
<dbReference type="InterPro" id="IPR041555">
    <property type="entry name" value="MG3"/>
</dbReference>
<dbReference type="InterPro" id="IPR040839">
    <property type="entry name" value="MG4"/>
</dbReference>
<dbReference type="InterPro" id="IPR008930">
    <property type="entry name" value="Terpenoid_cyclase/PrenylTrfase"/>
</dbReference>
<dbReference type="PANTHER" id="PTHR11412:SF182">
    <property type="entry name" value="ALPHA-2-MACROGLOBULIN-LIKE PROTEIN 1"/>
    <property type="match status" value="1"/>
</dbReference>
<dbReference type="PANTHER" id="PTHR11412">
    <property type="entry name" value="MACROGLOBULIN / COMPLEMENT"/>
    <property type="match status" value="1"/>
</dbReference>
<dbReference type="Pfam" id="PF00207">
    <property type="entry name" value="A2M"/>
    <property type="match status" value="1"/>
</dbReference>
<dbReference type="Pfam" id="PF07703">
    <property type="entry name" value="A2M_BRD"/>
    <property type="match status" value="1"/>
</dbReference>
<dbReference type="Pfam" id="PF07677">
    <property type="entry name" value="A2M_recep"/>
    <property type="match status" value="1"/>
</dbReference>
<dbReference type="Pfam" id="PF01835">
    <property type="entry name" value="MG2"/>
    <property type="match status" value="1"/>
</dbReference>
<dbReference type="Pfam" id="PF17791">
    <property type="entry name" value="MG3"/>
    <property type="match status" value="1"/>
</dbReference>
<dbReference type="Pfam" id="PF17789">
    <property type="entry name" value="MG4"/>
    <property type="match status" value="1"/>
</dbReference>
<dbReference type="Pfam" id="PF07678">
    <property type="entry name" value="TED_complement"/>
    <property type="match status" value="1"/>
</dbReference>
<dbReference type="SMART" id="SM01360">
    <property type="entry name" value="A2M"/>
    <property type="match status" value="1"/>
</dbReference>
<dbReference type="SMART" id="SM01359">
    <property type="entry name" value="A2M_N_2"/>
    <property type="match status" value="1"/>
</dbReference>
<dbReference type="SMART" id="SM01361">
    <property type="entry name" value="A2M_recep"/>
    <property type="match status" value="1"/>
</dbReference>
<dbReference type="SMART" id="SM01419">
    <property type="entry name" value="Thiol-ester_cl"/>
    <property type="match status" value="1"/>
</dbReference>
<dbReference type="SUPFAM" id="SSF49410">
    <property type="entry name" value="Alpha-macroglobulin receptor domain"/>
    <property type="match status" value="1"/>
</dbReference>
<dbReference type="SUPFAM" id="SSF81296">
    <property type="entry name" value="E set domains"/>
    <property type="match status" value="1"/>
</dbReference>
<dbReference type="SUPFAM" id="SSF48239">
    <property type="entry name" value="Terpenoid cyclases/Protein prenyltransferases"/>
    <property type="match status" value="1"/>
</dbReference>
<dbReference type="PROSITE" id="PS00477">
    <property type="entry name" value="ALPHA_2_MACROGLOBULIN"/>
    <property type="match status" value="1"/>
</dbReference>
<evidence type="ECO:0000250" key="1">
    <source>
        <dbReference type="UniProtKB" id="P01023"/>
    </source>
</evidence>
<evidence type="ECO:0000255" key="2"/>
<evidence type="ECO:0000269" key="3">
    <source>
    </source>
</evidence>
<evidence type="ECO:0000269" key="4">
    <source>
    </source>
</evidence>
<evidence type="ECO:0000269" key="5">
    <source>
    </source>
</evidence>
<evidence type="ECO:0000269" key="6">
    <source>
    </source>
</evidence>
<evidence type="ECO:0000269" key="7">
    <source ref="4"/>
</evidence>
<evidence type="ECO:0000303" key="8">
    <source>
    </source>
</evidence>
<evidence type="ECO:0000305" key="9"/>
<evidence type="ECO:0000312" key="10">
    <source>
        <dbReference type="EMBL" id="AAI12132.1"/>
    </source>
</evidence>
<evidence type="ECO:0000312" key="11">
    <source>
        <dbReference type="EMBL" id="BAB71612.1"/>
    </source>
</evidence>
<evidence type="ECO:0000312" key="12">
    <source>
        <dbReference type="EMBL" id="BAF83044.1"/>
    </source>
</evidence>
<evidence type="ECO:0000312" key="13">
    <source>
        <dbReference type="HGNC" id="HGNC:23336"/>
    </source>
</evidence>
<evidence type="ECO:0007829" key="14">
    <source>
        <dbReference type="PDB" id="7Q5Z"/>
    </source>
</evidence>
<evidence type="ECO:0007829" key="15">
    <source>
        <dbReference type="PDB" id="7Q60"/>
    </source>
</evidence>
<evidence type="ECO:0007829" key="16">
    <source>
        <dbReference type="PDB" id="7Q61"/>
    </source>
</evidence>
<evidence type="ECO:0007829" key="17">
    <source>
        <dbReference type="PDB" id="7Q62"/>
    </source>
</evidence>
<accession>A8K2U0</accession>
<accession>B5MDD1</accession>
<accession>B7Z7V4</accession>
<accession>D3DUV3</accession>
<accession>F5H2Z2</accession>
<accession>Q2M224</accession>
<accession>Q6ZW52</accession>
<accession>Q6ZW53</accession>
<accession>Q8N1M4</accession>
<accession>Q96LQ8</accession>
<proteinExistence type="evidence at protein level"/>
<keyword id="KW-0002">3D-structure</keyword>
<keyword id="KW-0025">Alternative splicing</keyword>
<keyword id="KW-0082">Bait region</keyword>
<keyword id="KW-1015">Disulfide bond</keyword>
<keyword id="KW-0325">Glycoprotein</keyword>
<keyword id="KW-0646">Protease inhibitor</keyword>
<keyword id="KW-1267">Proteomics identification</keyword>
<keyword id="KW-1185">Reference proteome</keyword>
<keyword id="KW-0964">Secreted</keyword>
<keyword id="KW-0722">Serine protease inhibitor</keyword>
<keyword id="KW-0732">Signal</keyword>
<keyword id="KW-0882">Thioester bond</keyword>
<feature type="signal peptide" evidence="2">
    <location>
        <begin position="1"/>
        <end position="17"/>
    </location>
</feature>
<feature type="chain" id="PRO_0000318074" description="Alpha-2-macroglobulin-like protein 1" evidence="2">
    <location>
        <begin position="18"/>
        <end position="1454"/>
    </location>
</feature>
<feature type="region of interest" description="Bait region" evidence="2">
    <location>
        <begin position="695"/>
        <end position="726"/>
    </location>
</feature>
<feature type="glycosylation site" description="N-linked (GlcNAc...) asparagine" evidence="2">
    <location>
        <position position="120"/>
    </location>
</feature>
<feature type="glycosylation site" description="N-linked (GlcNAc...) asparagine" evidence="2">
    <location>
        <position position="281"/>
    </location>
</feature>
<feature type="glycosylation site" description="N-linked (GlcNAc...) asparagine" evidence="2">
    <location>
        <position position="409"/>
    </location>
</feature>
<feature type="glycosylation site" description="N-linked (GlcNAc...) asparagine" evidence="2">
    <location>
        <position position="857"/>
    </location>
</feature>
<feature type="glycosylation site" description="N-linked (GlcNAc...) asparagine" evidence="2">
    <location>
        <position position="1020"/>
    </location>
</feature>
<feature type="disulfide bond" evidence="1">
    <location>
        <begin position="40"/>
        <end position="78"/>
    </location>
</feature>
<feature type="disulfide bond" evidence="1">
    <location>
        <begin position="241"/>
        <end position="291"/>
    </location>
</feature>
<feature type="disulfide bond" evidence="1">
    <location>
        <begin position="259"/>
        <end position="279"/>
    </location>
</feature>
<feature type="disulfide bond" evidence="1">
    <location>
        <begin position="464"/>
        <end position="557"/>
    </location>
</feature>
<feature type="disulfide bond" evidence="1">
    <location>
        <begin position="589"/>
        <end position="769"/>
    </location>
</feature>
<feature type="disulfide bond" evidence="1">
    <location>
        <begin position="819"/>
        <end position="847"/>
    </location>
</feature>
<feature type="disulfide bond" evidence="1">
    <location>
        <begin position="845"/>
        <end position="881"/>
    </location>
</feature>
<feature type="disulfide bond" evidence="1">
    <location>
        <begin position="919"/>
        <end position="1307"/>
    </location>
</feature>
<feature type="disulfide bond" evidence="1">
    <location>
        <begin position="1075"/>
        <end position="1123"/>
    </location>
</feature>
<feature type="disulfide bond" evidence="1">
    <location>
        <begin position="1338"/>
        <end position="1453"/>
    </location>
</feature>
<feature type="cross-link" description="Isoglutamyl cysteine thioester (Cys-Gln)" evidence="1">
    <location>
        <begin position="970"/>
        <end position="973"/>
    </location>
</feature>
<feature type="splice variant" id="VSP_057135" description="In isoform 2." evidence="8">
    <location>
        <begin position="2"/>
        <end position="492"/>
    </location>
</feature>
<feature type="sequence variant" id="VAR_055463" description="In dbSNP:rs11047499.">
    <original>G</original>
    <variation>R</variation>
    <location>
        <position position="207"/>
    </location>
</feature>
<feature type="sequence variant" id="VAR_081009" description="Risk factor for otitis media." evidence="6">
    <location>
        <begin position="255"/>
        <end position="1454"/>
    </location>
</feature>
<feature type="sequence variant" id="VAR_081010" description="In dbSNP:rs192888493." evidence="6">
    <original>V</original>
    <variation>A</variation>
    <location>
        <position position="296"/>
    </location>
</feature>
<feature type="sequence variant" id="VAR_081011" description="May be a risk factor for otitis media; dbSNP:rs863224953." evidence="6">
    <original>P</original>
    <variation>R</variation>
    <location>
        <position position="356"/>
    </location>
</feature>
<feature type="sequence variant" id="VAR_059083" description="In dbSNP:rs1860926." evidence="3 5 7">
    <original>D</original>
    <variation>E</variation>
    <location>
        <position position="850"/>
    </location>
</feature>
<feature type="sequence variant" id="VAR_081012" description="Risk factor for otitis media." evidence="6">
    <location>
        <begin position="893"/>
        <end position="1454"/>
    </location>
</feature>
<feature type="sequence variant" id="VAR_055464" description="In dbSNP:rs1558526.">
    <original>C</original>
    <variation>Y</variation>
    <location>
        <position position="970"/>
    </location>
</feature>
<feature type="sequence variant" id="VAR_081013" description="Risk factor for otitis media." evidence="6">
    <location>
        <begin position="972"/>
        <end position="1454"/>
    </location>
</feature>
<feature type="sequence variant" id="VAR_081014" description="May be a risk factor for otitis media; dbSNP:rs201725377." evidence="6">
    <original>R</original>
    <variation>W</variation>
    <location>
        <position position="1001"/>
    </location>
</feature>
<feature type="sequence variant" id="VAR_071854" description="In dbSNP:rs1860967." evidence="3 5 7">
    <original>R</original>
    <variation>W</variation>
    <location>
        <position position="1122"/>
    </location>
</feature>
<feature type="sequence variant" id="VAR_055465" description="In dbSNP:rs7959680.">
    <original>T</original>
    <variation>M</variation>
    <location>
        <position position="1131"/>
    </location>
</feature>
<feature type="sequence variant" id="VAR_059084" description="In dbSNP:rs10219561." evidence="3 5 7">
    <original>H</original>
    <variation>R</variation>
    <location>
        <position position="1229"/>
    </location>
</feature>
<feature type="sequence variant" id="VAR_071855" description="In dbSNP:rs7308811." evidence="3 5 7">
    <original>M</original>
    <variation>V</variation>
    <location>
        <position position="1257"/>
    </location>
</feature>
<feature type="sequence variant" id="VAR_071856" description="In dbSNP:rs201083574." evidence="3">
    <original>T</original>
    <variation>M</variation>
    <location>
        <position position="1312"/>
    </location>
</feature>
<feature type="sequence variant" id="VAR_055466" description="In dbSNP:rs7315591.">
    <original>T</original>
    <variation>A</variation>
    <location>
        <position position="1412"/>
    </location>
</feature>
<feature type="sequence variant" id="VAR_081015" description="In dbSNP:rs863224955." evidence="6">
    <original>A</original>
    <variation>V</variation>
    <location>
        <position position="1431"/>
    </location>
</feature>
<feature type="sequence conflict" description="In Ref. 1; BAC85654/BAF83044." evidence="9" ref="1">
    <original>F</original>
    <variation>L</variation>
    <location>
        <position position="733"/>
    </location>
</feature>
<feature type="sequence conflict" description="In Ref. 2; AL832139." evidence="9" ref="2">
    <original>G</original>
    <variation>E</variation>
    <location>
        <position position="748"/>
    </location>
</feature>
<feature type="sequence conflict" description="In Ref. 1; BAF83044." evidence="9" ref="1">
    <original>M</original>
    <variation>I</variation>
    <location>
        <position position="1150"/>
    </location>
</feature>
<feature type="sequence conflict" description="In Ref. 1; BAC85654." evidence="9" ref="1">
    <original>L</original>
    <variation>P</variation>
    <location>
        <position position="1248"/>
    </location>
</feature>
<feature type="sequence conflict" description="In Ref. 2; AL832139." evidence="9" ref="2">
    <original>P</original>
    <variation>L</variation>
    <location>
        <position position="1452"/>
    </location>
</feature>
<feature type="strand" evidence="16">
    <location>
        <begin position="24"/>
        <end position="32"/>
    </location>
</feature>
<feature type="strand" evidence="16">
    <location>
        <begin position="35"/>
        <end position="42"/>
    </location>
</feature>
<feature type="strand" evidence="16">
    <location>
        <begin position="51"/>
        <end position="57"/>
    </location>
</feature>
<feature type="strand" evidence="16">
    <location>
        <begin position="62"/>
        <end position="69"/>
    </location>
</feature>
<feature type="strand" evidence="16">
    <location>
        <begin position="76"/>
        <end position="82"/>
    </location>
</feature>
<feature type="strand" evidence="16">
    <location>
        <begin position="87"/>
        <end position="102"/>
    </location>
</feature>
<feature type="strand" evidence="16">
    <location>
        <begin position="105"/>
        <end position="116"/>
    </location>
</feature>
<feature type="strand" evidence="16">
    <location>
        <begin position="121"/>
        <end position="127"/>
    </location>
</feature>
<feature type="strand" evidence="16">
    <location>
        <begin position="129"/>
        <end position="131"/>
    </location>
</feature>
<feature type="strand" evidence="16">
    <location>
        <begin position="136"/>
        <end position="144"/>
    </location>
</feature>
<feature type="strand" evidence="16">
    <location>
        <begin position="155"/>
        <end position="161"/>
    </location>
</feature>
<feature type="strand" evidence="16">
    <location>
        <begin position="167"/>
        <end position="174"/>
    </location>
</feature>
<feature type="strand" evidence="16">
    <location>
        <begin position="180"/>
        <end position="186"/>
    </location>
</feature>
<feature type="strand" evidence="16">
    <location>
        <begin position="194"/>
        <end position="200"/>
    </location>
</feature>
<feature type="turn" evidence="16">
    <location>
        <begin position="201"/>
        <end position="204"/>
    </location>
</feature>
<feature type="strand" evidence="16">
    <location>
        <begin position="205"/>
        <end position="211"/>
    </location>
</feature>
<feature type="strand" evidence="16">
    <location>
        <begin position="219"/>
        <end position="223"/>
    </location>
</feature>
<feature type="strand" evidence="16">
    <location>
        <begin position="227"/>
        <end position="232"/>
    </location>
</feature>
<feature type="strand" evidence="16">
    <location>
        <begin position="234"/>
        <end position="244"/>
    </location>
</feature>
<feature type="strand" evidence="16">
    <location>
        <begin position="252"/>
        <end position="262"/>
    </location>
</feature>
<feature type="strand" evidence="17">
    <location>
        <begin position="269"/>
        <end position="271"/>
    </location>
</feature>
<feature type="strand" evidence="16">
    <location>
        <begin position="278"/>
        <end position="285"/>
    </location>
</feature>
<feature type="strand" evidence="16">
    <location>
        <begin position="291"/>
        <end position="297"/>
    </location>
</feature>
<feature type="helix" evidence="14">
    <location>
        <begin position="298"/>
        <end position="300"/>
    </location>
</feature>
<feature type="strand" evidence="16">
    <location>
        <begin position="306"/>
        <end position="320"/>
    </location>
</feature>
<feature type="turn" evidence="16">
    <location>
        <begin position="321"/>
        <end position="323"/>
    </location>
</feature>
<feature type="strand" evidence="16">
    <location>
        <begin position="326"/>
        <end position="336"/>
    </location>
</feature>
<feature type="strand" evidence="16">
    <location>
        <begin position="338"/>
        <end position="347"/>
    </location>
</feature>
<feature type="strand" evidence="16">
    <location>
        <begin position="349"/>
        <end position="351"/>
    </location>
</feature>
<feature type="strand" evidence="16">
    <location>
        <begin position="357"/>
        <end position="364"/>
    </location>
</feature>
<feature type="strand" evidence="15">
    <location>
        <begin position="366"/>
        <end position="368"/>
    </location>
</feature>
<feature type="strand" evidence="16">
    <location>
        <begin position="375"/>
        <end position="382"/>
    </location>
</feature>
<feature type="strand" evidence="16">
    <location>
        <begin position="388"/>
        <end position="392"/>
    </location>
</feature>
<feature type="strand" evidence="16">
    <location>
        <begin position="398"/>
        <end position="403"/>
    </location>
</feature>
<feature type="strand" evidence="16">
    <location>
        <begin position="406"/>
        <end position="408"/>
    </location>
</feature>
<feature type="strand" evidence="16">
    <location>
        <begin position="413"/>
        <end position="419"/>
    </location>
</feature>
<feature type="strand" evidence="16">
    <location>
        <begin position="428"/>
        <end position="430"/>
    </location>
</feature>
<feature type="strand" evidence="16">
    <location>
        <begin position="434"/>
        <end position="436"/>
    </location>
</feature>
<feature type="strand" evidence="16">
    <location>
        <begin position="438"/>
        <end position="444"/>
    </location>
</feature>
<feature type="strand" evidence="15">
    <location>
        <begin position="448"/>
        <end position="450"/>
    </location>
</feature>
<feature type="strand" evidence="16">
    <location>
        <begin position="452"/>
        <end position="455"/>
    </location>
</feature>
<feature type="strand" evidence="16">
    <location>
        <begin position="466"/>
        <end position="475"/>
    </location>
</feature>
<feature type="turn" evidence="16">
    <location>
        <begin position="479"/>
        <end position="481"/>
    </location>
</feature>
<feature type="strand" evidence="14">
    <location>
        <begin position="483"/>
        <end position="485"/>
    </location>
</feature>
<feature type="strand" evidence="16">
    <location>
        <begin position="487"/>
        <end position="495"/>
    </location>
</feature>
<feature type="strand" evidence="16">
    <location>
        <begin position="498"/>
        <end position="507"/>
    </location>
</feature>
<feature type="helix" evidence="16">
    <location>
        <begin position="509"/>
        <end position="511"/>
    </location>
</feature>
<feature type="strand" evidence="16">
    <location>
        <begin position="516"/>
        <end position="523"/>
    </location>
</feature>
<feature type="strand" evidence="15">
    <location>
        <begin position="526"/>
        <end position="528"/>
    </location>
</feature>
<feature type="strand" evidence="16">
    <location>
        <begin position="533"/>
        <end position="539"/>
    </location>
</feature>
<feature type="strand" evidence="14">
    <location>
        <begin position="541"/>
        <end position="543"/>
    </location>
</feature>
<feature type="strand" evidence="16">
    <location>
        <begin position="545"/>
        <end position="551"/>
    </location>
</feature>
<feature type="strand" evidence="16">
    <location>
        <begin position="563"/>
        <end position="571"/>
    </location>
</feature>
<feature type="strand" evidence="16">
    <location>
        <begin position="575"/>
        <end position="582"/>
    </location>
</feature>
<feature type="strand" evidence="16">
    <location>
        <begin position="588"/>
        <end position="595"/>
    </location>
</feature>
<feature type="helix" evidence="16">
    <location>
        <begin position="596"/>
        <end position="601"/>
    </location>
</feature>
<feature type="strand" evidence="14">
    <location>
        <begin position="603"/>
        <end position="606"/>
    </location>
</feature>
<feature type="helix" evidence="16">
    <location>
        <begin position="609"/>
        <end position="614"/>
    </location>
</feature>
<feature type="strand" evidence="16">
    <location>
        <begin position="625"/>
        <end position="627"/>
    </location>
</feature>
<feature type="helix" evidence="16">
    <location>
        <begin position="671"/>
        <end position="676"/>
    </location>
</feature>
<feature type="turn" evidence="16">
    <location>
        <begin position="677"/>
        <end position="679"/>
    </location>
</feature>
<feature type="strand" evidence="16">
    <location>
        <begin position="680"/>
        <end position="687"/>
    </location>
</feature>
<feature type="strand" evidence="16">
    <location>
        <begin position="735"/>
        <end position="743"/>
    </location>
</feature>
<feature type="strand" evidence="16">
    <location>
        <begin position="748"/>
        <end position="755"/>
    </location>
</feature>
<feature type="strand" evidence="16">
    <location>
        <begin position="760"/>
        <end position="771"/>
    </location>
</feature>
<feature type="turn" evidence="16">
    <location>
        <begin position="772"/>
        <end position="774"/>
    </location>
</feature>
<feature type="strand" evidence="16">
    <location>
        <begin position="775"/>
        <end position="778"/>
    </location>
</feature>
<feature type="strand" evidence="16">
    <location>
        <begin position="782"/>
        <end position="786"/>
    </location>
</feature>
<feature type="strand" evidence="16">
    <location>
        <begin position="789"/>
        <end position="795"/>
    </location>
</feature>
<feature type="strand" evidence="16">
    <location>
        <begin position="798"/>
        <end position="801"/>
    </location>
</feature>
<feature type="strand" evidence="16">
    <location>
        <begin position="804"/>
        <end position="814"/>
    </location>
</feature>
<feature type="strand" evidence="16">
    <location>
        <begin position="816"/>
        <end position="818"/>
    </location>
</feature>
<feature type="strand" evidence="16">
    <location>
        <begin position="820"/>
        <end position="826"/>
    </location>
</feature>
<feature type="strand" evidence="16">
    <location>
        <begin position="832"/>
        <end position="834"/>
    </location>
</feature>
<feature type="helix" evidence="16">
    <location>
        <begin position="838"/>
        <end position="840"/>
    </location>
</feature>
<feature type="strand" evidence="16">
    <location>
        <begin position="841"/>
        <end position="846"/>
    </location>
</feature>
<feature type="strand" evidence="16">
    <location>
        <begin position="850"/>
        <end position="860"/>
    </location>
</feature>
<feature type="strand" evidence="16">
    <location>
        <begin position="864"/>
        <end position="874"/>
    </location>
</feature>
<feature type="helix" evidence="15">
    <location>
        <begin position="881"/>
        <end position="883"/>
    </location>
</feature>
<feature type="strand" evidence="15">
    <location>
        <begin position="890"/>
        <end position="892"/>
    </location>
</feature>
<feature type="strand" evidence="16">
    <location>
        <begin position="894"/>
        <end position="904"/>
    </location>
</feature>
<feature type="strand" evidence="16">
    <location>
        <begin position="906"/>
        <end position="918"/>
    </location>
</feature>
<feature type="strand" evidence="16">
    <location>
        <begin position="921"/>
        <end position="930"/>
    </location>
</feature>
<feature type="strand" evidence="16">
    <location>
        <begin position="943"/>
        <end position="953"/>
    </location>
</feature>
<feature type="turn" evidence="16">
    <location>
        <begin position="956"/>
        <end position="963"/>
    </location>
</feature>
<feature type="helix" evidence="16">
    <location>
        <begin position="971"/>
        <end position="973"/>
    </location>
</feature>
<feature type="helix" evidence="16">
    <location>
        <begin position="975"/>
        <end position="989"/>
    </location>
</feature>
<feature type="turn" evidence="16">
    <location>
        <begin position="990"/>
        <end position="992"/>
    </location>
</feature>
<feature type="helix" evidence="16">
    <location>
        <begin position="996"/>
        <end position="1010"/>
    </location>
</feature>
<feature type="helix" evidence="17">
    <location>
        <begin position="1011"/>
        <end position="1013"/>
    </location>
</feature>
<feature type="helix" evidence="14">
    <location>
        <begin position="1014"/>
        <end position="1016"/>
    </location>
</feature>
<feature type="strand" evidence="16">
    <location>
        <begin position="1021"/>
        <end position="1023"/>
    </location>
</feature>
<feature type="strand" evidence="16">
    <location>
        <begin position="1025"/>
        <end position="1028"/>
    </location>
</feature>
<feature type="strand" evidence="16">
    <location>
        <begin position="1030"/>
        <end position="1032"/>
    </location>
</feature>
<feature type="helix" evidence="16">
    <location>
        <begin position="1035"/>
        <end position="1045"/>
    </location>
</feature>
<feature type="helix" evidence="16">
    <location>
        <begin position="1048"/>
        <end position="1050"/>
    </location>
</feature>
<feature type="helix" evidence="16">
    <location>
        <begin position="1057"/>
        <end position="1069"/>
    </location>
</feature>
<feature type="strand" evidence="17">
    <location>
        <begin position="1072"/>
        <end position="1075"/>
    </location>
</feature>
<feature type="strand" evidence="14">
    <location>
        <begin position="1079"/>
        <end position="1081"/>
    </location>
</feature>
<feature type="strand" evidence="16">
    <location>
        <begin position="1083"/>
        <end position="1086"/>
    </location>
</feature>
<feature type="turn" evidence="14">
    <location>
        <begin position="1087"/>
        <end position="1089"/>
    </location>
</feature>
<feature type="helix" evidence="16">
    <location>
        <begin position="1094"/>
        <end position="1105"/>
    </location>
</feature>
<feature type="strand" evidence="16">
    <location>
        <begin position="1106"/>
        <end position="1109"/>
    </location>
</feature>
<feature type="helix" evidence="16">
    <location>
        <begin position="1115"/>
        <end position="1124"/>
    </location>
</feature>
<feature type="helix" evidence="16">
    <location>
        <begin position="1127"/>
        <end position="1130"/>
    </location>
</feature>
<feature type="helix" evidence="16">
    <location>
        <begin position="1135"/>
        <end position="1143"/>
    </location>
</feature>
<feature type="turn" evidence="16">
    <location>
        <begin position="1144"/>
        <end position="1148"/>
    </location>
</feature>
<feature type="strand" evidence="16">
    <location>
        <begin position="1150"/>
        <end position="1154"/>
    </location>
</feature>
<feature type="turn" evidence="16">
    <location>
        <begin position="1155"/>
        <end position="1160"/>
    </location>
</feature>
<feature type="strand" evidence="14">
    <location>
        <begin position="1163"/>
        <end position="1167"/>
    </location>
</feature>
<feature type="strand" evidence="14">
    <location>
        <begin position="1170"/>
        <end position="1173"/>
    </location>
</feature>
<feature type="helix" evidence="16">
    <location>
        <begin position="1192"/>
        <end position="1204"/>
    </location>
</feature>
<feature type="strand" evidence="15">
    <location>
        <begin position="1205"/>
        <end position="1208"/>
    </location>
</feature>
<feature type="helix" evidence="16">
    <location>
        <begin position="1212"/>
        <end position="1225"/>
    </location>
</feature>
<feature type="strand" evidence="16">
    <location>
        <begin position="1230"/>
        <end position="1234"/>
    </location>
</feature>
<feature type="strand" evidence="16">
    <location>
        <begin position="1236"/>
        <end position="1239"/>
    </location>
</feature>
<feature type="helix" evidence="16">
    <location>
        <begin position="1240"/>
        <end position="1254"/>
    </location>
</feature>
<feature type="strand" evidence="16">
    <location>
        <begin position="1260"/>
        <end position="1268"/>
    </location>
</feature>
<feature type="strand" evidence="15">
    <location>
        <begin position="1269"/>
        <end position="1271"/>
    </location>
</feature>
<feature type="strand" evidence="16">
    <location>
        <begin position="1274"/>
        <end position="1278"/>
    </location>
</feature>
<feature type="strand" evidence="16">
    <location>
        <begin position="1280"/>
        <end position="1282"/>
    </location>
</feature>
<feature type="strand" evidence="16">
    <location>
        <begin position="1287"/>
        <end position="1290"/>
    </location>
</feature>
<feature type="strand" evidence="16">
    <location>
        <begin position="1295"/>
        <end position="1306"/>
    </location>
</feature>
<feature type="strand" evidence="16">
    <location>
        <begin position="1308"/>
        <end position="1318"/>
    </location>
</feature>
<feature type="strand" evidence="14">
    <location>
        <begin position="1325"/>
        <end position="1332"/>
    </location>
</feature>
<feature type="strand" evidence="14">
    <location>
        <begin position="1338"/>
        <end position="1340"/>
    </location>
</feature>
<feature type="strand" evidence="14">
    <location>
        <begin position="1347"/>
        <end position="1355"/>
    </location>
</feature>
<feature type="strand" evidence="14">
    <location>
        <begin position="1357"/>
        <end position="1361"/>
    </location>
</feature>
<feature type="strand" evidence="14">
    <location>
        <begin position="1365"/>
        <end position="1370"/>
    </location>
</feature>
<feature type="turn" evidence="14">
    <location>
        <begin position="1378"/>
        <end position="1380"/>
    </location>
</feature>
<feature type="helix" evidence="14">
    <location>
        <begin position="1381"/>
        <end position="1386"/>
    </location>
</feature>
<feature type="strand" evidence="14">
    <location>
        <begin position="1393"/>
        <end position="1396"/>
    </location>
</feature>
<feature type="strand" evidence="14">
    <location>
        <begin position="1398"/>
        <end position="1406"/>
    </location>
</feature>
<feature type="strand" evidence="14">
    <location>
        <begin position="1413"/>
        <end position="1423"/>
    </location>
</feature>
<feature type="strand" evidence="14">
    <location>
        <begin position="1425"/>
        <end position="1427"/>
    </location>
</feature>
<feature type="strand" evidence="14">
    <location>
        <begin position="1431"/>
        <end position="1439"/>
    </location>
</feature>
<feature type="strand" evidence="14">
    <location>
        <begin position="1443"/>
        <end position="1449"/>
    </location>
</feature>
<reference evidence="12" key="1">
    <citation type="journal article" date="2004" name="Nat. Genet.">
        <title>Complete sequencing and characterization of 21,243 full-length human cDNAs.</title>
        <authorList>
            <person name="Ota T."/>
            <person name="Suzuki Y."/>
            <person name="Nishikawa T."/>
            <person name="Otsuki T."/>
            <person name="Sugiyama T."/>
            <person name="Irie R."/>
            <person name="Wakamatsu A."/>
            <person name="Hayashi K."/>
            <person name="Sato H."/>
            <person name="Nagai K."/>
            <person name="Kimura K."/>
            <person name="Makita H."/>
            <person name="Sekine M."/>
            <person name="Obayashi M."/>
            <person name="Nishi T."/>
            <person name="Shibahara T."/>
            <person name="Tanaka T."/>
            <person name="Ishii S."/>
            <person name="Yamamoto J."/>
            <person name="Saito K."/>
            <person name="Kawai Y."/>
            <person name="Isono Y."/>
            <person name="Nakamura Y."/>
            <person name="Nagahari K."/>
            <person name="Murakami K."/>
            <person name="Yasuda T."/>
            <person name="Iwayanagi T."/>
            <person name="Wagatsuma M."/>
            <person name="Shiratori A."/>
            <person name="Sudo H."/>
            <person name="Hosoiri T."/>
            <person name="Kaku Y."/>
            <person name="Kodaira H."/>
            <person name="Kondo H."/>
            <person name="Sugawara M."/>
            <person name="Takahashi M."/>
            <person name="Kanda K."/>
            <person name="Yokoi T."/>
            <person name="Furuya T."/>
            <person name="Kikkawa E."/>
            <person name="Omura Y."/>
            <person name="Abe K."/>
            <person name="Kamihara K."/>
            <person name="Katsuta N."/>
            <person name="Sato K."/>
            <person name="Tanikawa M."/>
            <person name="Yamazaki M."/>
            <person name="Ninomiya K."/>
            <person name="Ishibashi T."/>
            <person name="Yamashita H."/>
            <person name="Murakawa K."/>
            <person name="Fujimori K."/>
            <person name="Tanai H."/>
            <person name="Kimata M."/>
            <person name="Watanabe M."/>
            <person name="Hiraoka S."/>
            <person name="Chiba Y."/>
            <person name="Ishida S."/>
            <person name="Ono Y."/>
            <person name="Takiguchi S."/>
            <person name="Watanabe S."/>
            <person name="Yosida M."/>
            <person name="Hotuta T."/>
            <person name="Kusano J."/>
            <person name="Kanehori K."/>
            <person name="Takahashi-Fujii A."/>
            <person name="Hara H."/>
            <person name="Tanase T.-O."/>
            <person name="Nomura Y."/>
            <person name="Togiya S."/>
            <person name="Komai F."/>
            <person name="Hara R."/>
            <person name="Takeuchi K."/>
            <person name="Arita M."/>
            <person name="Imose N."/>
            <person name="Musashino K."/>
            <person name="Yuuki H."/>
            <person name="Oshima A."/>
            <person name="Sasaki N."/>
            <person name="Aotsuka S."/>
            <person name="Yoshikawa Y."/>
            <person name="Matsunawa H."/>
            <person name="Ichihara T."/>
            <person name="Shiohata N."/>
            <person name="Sano S."/>
            <person name="Moriya S."/>
            <person name="Momiyama H."/>
            <person name="Satoh N."/>
            <person name="Takami S."/>
            <person name="Terashima Y."/>
            <person name="Suzuki O."/>
            <person name="Nakagawa S."/>
            <person name="Senoh A."/>
            <person name="Mizoguchi H."/>
            <person name="Goto Y."/>
            <person name="Shimizu F."/>
            <person name="Wakebe H."/>
            <person name="Hishigaki H."/>
            <person name="Watanabe T."/>
            <person name="Sugiyama A."/>
            <person name="Takemoto M."/>
            <person name="Kawakami B."/>
            <person name="Yamazaki M."/>
            <person name="Watanabe K."/>
            <person name="Kumagai A."/>
            <person name="Itakura S."/>
            <person name="Fukuzumi Y."/>
            <person name="Fujimori Y."/>
            <person name="Komiyama M."/>
            <person name="Tashiro H."/>
            <person name="Tanigami A."/>
            <person name="Fujiwara T."/>
            <person name="Ono T."/>
            <person name="Yamada K."/>
            <person name="Fujii Y."/>
            <person name="Ozaki K."/>
            <person name="Hirao M."/>
            <person name="Ohmori Y."/>
            <person name="Kawabata A."/>
            <person name="Hikiji T."/>
            <person name="Kobatake N."/>
            <person name="Inagaki H."/>
            <person name="Ikema Y."/>
            <person name="Okamoto S."/>
            <person name="Okitani R."/>
            <person name="Kawakami T."/>
            <person name="Noguchi S."/>
            <person name="Itoh T."/>
            <person name="Shigeta K."/>
            <person name="Senba T."/>
            <person name="Matsumura K."/>
            <person name="Nakajima Y."/>
            <person name="Mizuno T."/>
            <person name="Morinaga M."/>
            <person name="Sasaki M."/>
            <person name="Togashi T."/>
            <person name="Oyama M."/>
            <person name="Hata H."/>
            <person name="Watanabe M."/>
            <person name="Komatsu T."/>
            <person name="Mizushima-Sugano J."/>
            <person name="Satoh T."/>
            <person name="Shirai Y."/>
            <person name="Takahashi Y."/>
            <person name="Nakagawa K."/>
            <person name="Okumura K."/>
            <person name="Nagase T."/>
            <person name="Nomura N."/>
            <person name="Kikuchi H."/>
            <person name="Masuho Y."/>
            <person name="Yamashita R."/>
            <person name="Nakai K."/>
            <person name="Yada T."/>
            <person name="Nakamura Y."/>
            <person name="Ohara O."/>
            <person name="Isogai T."/>
            <person name="Sugano S."/>
        </authorList>
    </citation>
    <scope>NUCLEOTIDE SEQUENCE [LARGE SCALE MRNA] (ISOFORMS 1 AND 2)</scope>
    <scope>VARIANTS GLU-850; TRP-1122; ARG-1229; VAL-1257 AND MET-1312</scope>
    <source>
        <tissue evidence="11">Brain</tissue>
        <tissue>Testis</tissue>
        <tissue evidence="12">Tongue</tissue>
    </source>
</reference>
<reference key="2">
    <citation type="journal article" date="2007" name="BMC Genomics">
        <title>The full-ORF clone resource of the German cDNA consortium.</title>
        <authorList>
            <person name="Bechtel S."/>
            <person name="Rosenfelder H."/>
            <person name="Duda A."/>
            <person name="Schmidt C.P."/>
            <person name="Ernst U."/>
            <person name="Wellenreuther R."/>
            <person name="Mehrle A."/>
            <person name="Schuster C."/>
            <person name="Bahr A."/>
            <person name="Bloecker H."/>
            <person name="Heubner D."/>
            <person name="Hoerlein A."/>
            <person name="Michel G."/>
            <person name="Wedler H."/>
            <person name="Koehrer K."/>
            <person name="Ottenwaelder B."/>
            <person name="Poustka A."/>
            <person name="Wiemann S."/>
            <person name="Schupp I."/>
        </authorList>
    </citation>
    <scope>NUCLEOTIDE SEQUENCE [LARGE SCALE MRNA] (ISOFORM 1)</scope>
    <scope>VARIANTS GLU-850; TRP-1122; ARG-1229 AND VAL-1257</scope>
    <source>
        <tissue>Cervix</tissue>
    </source>
</reference>
<reference key="3">
    <citation type="journal article" date="2006" name="Nature">
        <title>The finished DNA sequence of human chromosome 12.</title>
        <authorList>
            <person name="Scherer S.E."/>
            <person name="Muzny D.M."/>
            <person name="Buhay C.J."/>
            <person name="Chen R."/>
            <person name="Cree A."/>
            <person name="Ding Y."/>
            <person name="Dugan-Rocha S."/>
            <person name="Gill R."/>
            <person name="Gunaratne P."/>
            <person name="Harris R.A."/>
            <person name="Hawes A.C."/>
            <person name="Hernandez J."/>
            <person name="Hodgson A.V."/>
            <person name="Hume J."/>
            <person name="Jackson A."/>
            <person name="Khan Z.M."/>
            <person name="Kovar-Smith C."/>
            <person name="Lewis L.R."/>
            <person name="Lozado R.J."/>
            <person name="Metzker M.L."/>
            <person name="Milosavljevic A."/>
            <person name="Miner G.R."/>
            <person name="Montgomery K.T."/>
            <person name="Morgan M.B."/>
            <person name="Nazareth L.V."/>
            <person name="Scott G."/>
            <person name="Sodergren E."/>
            <person name="Song X.-Z."/>
            <person name="Steffen D."/>
            <person name="Lovering R.C."/>
            <person name="Wheeler D.A."/>
            <person name="Worley K.C."/>
            <person name="Yuan Y."/>
            <person name="Zhang Z."/>
            <person name="Adams C.Q."/>
            <person name="Ansari-Lari M.A."/>
            <person name="Ayele M."/>
            <person name="Brown M.J."/>
            <person name="Chen G."/>
            <person name="Chen Z."/>
            <person name="Clerc-Blankenburg K.P."/>
            <person name="Davis C."/>
            <person name="Delgado O."/>
            <person name="Dinh H.H."/>
            <person name="Draper H."/>
            <person name="Gonzalez-Garay M.L."/>
            <person name="Havlak P."/>
            <person name="Jackson L.R."/>
            <person name="Jacob L.S."/>
            <person name="Kelly S.H."/>
            <person name="Li L."/>
            <person name="Li Z."/>
            <person name="Liu J."/>
            <person name="Liu W."/>
            <person name="Lu J."/>
            <person name="Maheshwari M."/>
            <person name="Nguyen B.-V."/>
            <person name="Okwuonu G.O."/>
            <person name="Pasternak S."/>
            <person name="Perez L.M."/>
            <person name="Plopper F.J.H."/>
            <person name="Santibanez J."/>
            <person name="Shen H."/>
            <person name="Tabor P.E."/>
            <person name="Verduzco D."/>
            <person name="Waldron L."/>
            <person name="Wang Q."/>
            <person name="Williams G.A."/>
            <person name="Zhang J."/>
            <person name="Zhou J."/>
            <person name="Allen C.C."/>
            <person name="Amin A.G."/>
            <person name="Anyalebechi V."/>
            <person name="Bailey M."/>
            <person name="Barbaria J.A."/>
            <person name="Bimage K.E."/>
            <person name="Bryant N.P."/>
            <person name="Burch P.E."/>
            <person name="Burkett C.E."/>
            <person name="Burrell K.L."/>
            <person name="Calderon E."/>
            <person name="Cardenas V."/>
            <person name="Carter K."/>
            <person name="Casias K."/>
            <person name="Cavazos I."/>
            <person name="Cavazos S.R."/>
            <person name="Ceasar H."/>
            <person name="Chacko J."/>
            <person name="Chan S.N."/>
            <person name="Chavez D."/>
            <person name="Christopoulos C."/>
            <person name="Chu J."/>
            <person name="Cockrell R."/>
            <person name="Cox C.D."/>
            <person name="Dang M."/>
            <person name="Dathorne S.R."/>
            <person name="David R."/>
            <person name="Davis C.M."/>
            <person name="Davy-Carroll L."/>
            <person name="Deshazo D.R."/>
            <person name="Donlin J.E."/>
            <person name="D'Souza L."/>
            <person name="Eaves K.A."/>
            <person name="Egan A."/>
            <person name="Emery-Cohen A.J."/>
            <person name="Escotto M."/>
            <person name="Flagg N."/>
            <person name="Forbes L.D."/>
            <person name="Gabisi A.M."/>
            <person name="Garza M."/>
            <person name="Hamilton C."/>
            <person name="Henderson N."/>
            <person name="Hernandez O."/>
            <person name="Hines S."/>
            <person name="Hogues M.E."/>
            <person name="Huang M."/>
            <person name="Idlebird D.G."/>
            <person name="Johnson R."/>
            <person name="Jolivet A."/>
            <person name="Jones S."/>
            <person name="Kagan R."/>
            <person name="King L.M."/>
            <person name="Leal B."/>
            <person name="Lebow H."/>
            <person name="Lee S."/>
            <person name="LeVan J.M."/>
            <person name="Lewis L.C."/>
            <person name="London P."/>
            <person name="Lorensuhewa L.M."/>
            <person name="Loulseged H."/>
            <person name="Lovett D.A."/>
            <person name="Lucier A."/>
            <person name="Lucier R.L."/>
            <person name="Ma J."/>
            <person name="Madu R.C."/>
            <person name="Mapua P."/>
            <person name="Martindale A.D."/>
            <person name="Martinez E."/>
            <person name="Massey E."/>
            <person name="Mawhiney S."/>
            <person name="Meador M.G."/>
            <person name="Mendez S."/>
            <person name="Mercado C."/>
            <person name="Mercado I.C."/>
            <person name="Merritt C.E."/>
            <person name="Miner Z.L."/>
            <person name="Minja E."/>
            <person name="Mitchell T."/>
            <person name="Mohabbat F."/>
            <person name="Mohabbat K."/>
            <person name="Montgomery B."/>
            <person name="Moore N."/>
            <person name="Morris S."/>
            <person name="Munidasa M."/>
            <person name="Ngo R.N."/>
            <person name="Nguyen N.B."/>
            <person name="Nickerson E."/>
            <person name="Nwaokelemeh O.O."/>
            <person name="Nwokenkwo S."/>
            <person name="Obregon M."/>
            <person name="Oguh M."/>
            <person name="Oragunye N."/>
            <person name="Oviedo R.J."/>
            <person name="Parish B.J."/>
            <person name="Parker D.N."/>
            <person name="Parrish J."/>
            <person name="Parks K.L."/>
            <person name="Paul H.A."/>
            <person name="Payton B.A."/>
            <person name="Perez A."/>
            <person name="Perrin W."/>
            <person name="Pickens A."/>
            <person name="Primus E.L."/>
            <person name="Pu L.-L."/>
            <person name="Puazo M."/>
            <person name="Quiles M.M."/>
            <person name="Quiroz J.B."/>
            <person name="Rabata D."/>
            <person name="Reeves K."/>
            <person name="Ruiz S.J."/>
            <person name="Shao H."/>
            <person name="Sisson I."/>
            <person name="Sonaike T."/>
            <person name="Sorelle R.P."/>
            <person name="Sutton A.E."/>
            <person name="Svatek A.F."/>
            <person name="Svetz L.A."/>
            <person name="Tamerisa K.S."/>
            <person name="Taylor T.R."/>
            <person name="Teague B."/>
            <person name="Thomas N."/>
            <person name="Thorn R.D."/>
            <person name="Trejos Z.Y."/>
            <person name="Trevino B.K."/>
            <person name="Ukegbu O.N."/>
            <person name="Urban J.B."/>
            <person name="Vasquez L.I."/>
            <person name="Vera V.A."/>
            <person name="Villasana D.M."/>
            <person name="Wang L."/>
            <person name="Ward-Moore S."/>
            <person name="Warren J.T."/>
            <person name="Wei X."/>
            <person name="White F."/>
            <person name="Williamson A.L."/>
            <person name="Wleczyk R."/>
            <person name="Wooden H.S."/>
            <person name="Wooden S.H."/>
            <person name="Yen J."/>
            <person name="Yoon L."/>
            <person name="Yoon V."/>
            <person name="Zorrilla S.E."/>
            <person name="Nelson D."/>
            <person name="Kucherlapati R."/>
            <person name="Weinstock G."/>
            <person name="Gibbs R.A."/>
        </authorList>
    </citation>
    <scope>NUCLEOTIDE SEQUENCE [LARGE SCALE GENOMIC DNA]</scope>
</reference>
<reference key="4">
    <citation type="submission" date="2005-09" db="EMBL/GenBank/DDBJ databases">
        <authorList>
            <person name="Mural R.J."/>
            <person name="Istrail S."/>
            <person name="Sutton G."/>
            <person name="Florea L."/>
            <person name="Halpern A.L."/>
            <person name="Mobarry C.M."/>
            <person name="Lippert R."/>
            <person name="Walenz B."/>
            <person name="Shatkay H."/>
            <person name="Dew I."/>
            <person name="Miller J.R."/>
            <person name="Flanigan M.J."/>
            <person name="Edwards N.J."/>
            <person name="Bolanos R."/>
            <person name="Fasulo D."/>
            <person name="Halldorsson B.V."/>
            <person name="Hannenhalli S."/>
            <person name="Turner R."/>
            <person name="Yooseph S."/>
            <person name="Lu F."/>
            <person name="Nusskern D.R."/>
            <person name="Shue B.C."/>
            <person name="Zheng X.H."/>
            <person name="Zhong F."/>
            <person name="Delcher A.L."/>
            <person name="Huson D.H."/>
            <person name="Kravitz S.A."/>
            <person name="Mouchard L."/>
            <person name="Reinert K."/>
            <person name="Remington K.A."/>
            <person name="Clark A.G."/>
            <person name="Waterman M.S."/>
            <person name="Eichler E.E."/>
            <person name="Adams M.D."/>
            <person name="Hunkapiller M.W."/>
            <person name="Myers E.W."/>
            <person name="Venter J.C."/>
        </authorList>
    </citation>
    <scope>NUCLEOTIDE SEQUENCE [LARGE SCALE GENOMIC DNA]</scope>
    <scope>VARIANTS GLU-850; TRP-1122; ARG-1229 AND VAL-1257</scope>
</reference>
<reference key="5">
    <citation type="journal article" date="2004" name="Genome Res.">
        <title>The status, quality, and expansion of the NIH full-length cDNA project: the Mammalian Gene Collection (MGC).</title>
        <authorList>
            <consortium name="The MGC Project Team"/>
        </authorList>
    </citation>
    <scope>NUCLEOTIDE SEQUENCE [LARGE SCALE MRNA] OF 1290-1454</scope>
    <source>
        <tissue evidence="10">Brain</tissue>
    </source>
</reference>
<reference key="6">
    <citation type="journal article" date="2006" name="J. Biol. Chem.">
        <title>A novel protease inhibitor of the alpha2-macroglobulin family expressed in the human epidermis.</title>
        <authorList>
            <person name="Galliano M.-F."/>
            <person name="Toulza E."/>
            <person name="Gallinaro H."/>
            <person name="Jonca N."/>
            <person name="Ishida-Yamamoto A."/>
            <person name="Serre G."/>
            <person name="Guerrin M."/>
        </authorList>
    </citation>
    <scope>FUNCTION</scope>
    <scope>SUBUNIT</scope>
    <scope>SUBCELLULAR LOCATION</scope>
    <scope>TISSUE SPECIFICITY</scope>
    <scope>DEVELOPMENTAL STAGE</scope>
</reference>
<reference key="7">
    <citation type="journal article" date="2015" name="Nat. Genet.">
        <title>Rare A2ML1 variants confer susceptibility to otitis media.</title>
        <authorList>
            <consortium name="University of Washington Center for Mendelian Genomics"/>
            <person name="Santos-Cortez R.L."/>
            <person name="Chiong C.M."/>
            <person name="Reyes-Quintos M.R."/>
            <person name="Tantoco M.L."/>
            <person name="Wang X."/>
            <person name="Acharya A."/>
            <person name="Abbe I."/>
            <person name="Giese A.P."/>
            <person name="Smith J.D."/>
            <person name="Allen E.K."/>
            <person name="Li B."/>
            <person name="Cutiongco-de la Paz E.M."/>
            <person name="Garcia M.C."/>
            <person name="Llanes E.G."/>
            <person name="Labra P.J."/>
            <person name="Gloria-Cruz T.L."/>
            <person name="Chan A.L."/>
            <person name="Wang G.T."/>
            <person name="Daly K.A."/>
            <person name="Shendure J."/>
            <person name="Bamshad M.J."/>
            <person name="Nickerson D.A."/>
            <person name="Patel J.A."/>
            <person name="Riazuddin S."/>
            <person name="Sale M.M."/>
            <person name="Chonmaitree T."/>
            <person name="Ahmed Z.M."/>
            <person name="Abes G.T."/>
            <person name="Leal S.M."/>
        </authorList>
    </citation>
    <scope>INVOLVEMENT IN OM</scope>
    <scope>VARIANTS 255-GLN--GLU-1454 DEL; ALA-296; ARG-356; 893-ARG--GLU-1454 DEL; 972-GLU--GLU-1454 DEL; TRP-1001 AND VAL-1431</scope>
</reference>
<name>A2ML1_HUMAN</name>
<sequence length="1454" mass="161107">MWAQLLLGMLALSPAIAEELPNYLVTLPARLNFPSVQKVCLDLSPGYSDVKFTVTLETKDKTQKLLEYSGLKKRHLHCISFLVPPPAGGTEEVATIRVSGVGNNISFEEKKKVLIQRQGNGTFVQTDKPLYTPGQQVYFRIVTMDSNFVPVNDKYSMVELQDPNSNRIAQWLEVVPEQGIVDLSFQLAPEAMLGTYTVAVAEGKTFGTFSVEEYVLPKFKVEVVEPKELSTVQESFLVKICCRYTYGKPMLGAVQVSVCQKANTYWYREVEREQLPDKCRNLSGQTDKTGCFSAPVDMATFDLIGYAYSHQINIVATVVEEGTGVEANATQNIYISPQMGSMTFEDTSNFYHPNFPFSGKIRVRGHDDSFLKNHLVFLVIYGTNGTFNQTLVTDNNGLAPFTLETSGWNGTDVSLEGKFQMEDLVYNPEQVPRYYQNAYLHLRPFYSTTRSFLGIHRLNGPLKCGQPQEVLVDYYIDPADASPDQEISFSYYLIGKGSLVMEGQKHLNSKKKGLKASFSLSLTFTSRLAPDPSLVIYAIFPSGGVVADKIQFSVEMCFDNQVSLGFSPSQQLPGAEVELQLQAAPGSLCALRAVDESVLLLRPDRELSNRSVYGMFPFWYGHYPYQVAEYDQCPVSGPWDFPQPLIDPMPQGHSSQRSIIWRPSFSEGTDLFSFFRDVGLKILSNAKIKKPVDCSHRSPEYSTAMGAGGGHPEAFESSTPLHQAEDSQVRQYFPETWLWDLFPIGNSGKEAVHVTVPDAITEWKAMSFCTSQSRGFGLSPTVGLTAFKPFFVDLTLPYSVVRGESFRLTATIFNYLKDCIRVQTDLAKSHEYQLESWADSQTSSCLCADDAKTHHWNITAVKLGHINFTISTKILDSNEPCGGQKGFVPQKGRSDTLIKPVLVKPEGVLVEKTHSSLLCPKGKVASESVSLELPVDIVPDSTKAYVTVLGDIMGTALQNLDGLVQMPSGCGEQNMVLFAPIIYVLQYLEKAGLLTEEIRSRAVGFLEIGYQKELMYKHSNGSYSAFGERDGNGNTWLTAFVTKCFGQAQKFIFIDPKNIQDALKWMAGNQLPSGCYANVGNLLHTAMKGGVDDEVSLTAYVTAALLEMGKDVDDPMVSQGLRCLKNSATSTTNLYTQALLAYIFSLAGEMDIRNILLKQLDQQAIISGESIYWSQKPTPSSNASPWSEPAAVDVELTAYALLAQLTKPSLTQKEIAKATSIVAWLAKQHNAYGGFSSTQDTVVALQALAKYATTAYMPSEEINLVVKSTENFQRTFNIQSVNRLVFQQDTLPNVPGMYTLEASGQGCVYVQTVLRYNILPPTNMKTFSLSVEIGKARCEQPTSPRSLTLTIHTSYVGSRSSSNMAIVEVKMLSGFSPMEGTNQLLLQQPLVKKVEFGTDTLNIYLDELIKNTQTYTFTISQSVLVTNLKPATIKVYDYYLPDEQATIQYSDPCE</sequence>
<gene>
    <name evidence="10" type="primary">A2ML1</name>
    <name evidence="13" type="synonym">CPAMD9</name>
</gene>